<gene>
    <name type="primary">VSP1</name>
    <name type="ordered locus">At5g24780</name>
    <name type="ORF">T4C12</name>
</gene>
<comment type="function">
    <text evidence="1">May function as somatic storage protein during early seedling development.</text>
</comment>
<comment type="alternative products">
    <event type="alternative splicing"/>
    <isoform>
        <id>O49195-1</id>
        <name>1</name>
        <sequence type="displayed"/>
    </isoform>
    <text>A number of isoforms are produced. According to EST sequences.</text>
</comment>
<comment type="tissue specificity">
    <text>Expressed in leaves and in gynoecia, especially in styles, the basal and distal ends of ovaries and in siliques.</text>
</comment>
<comment type="induction">
    <text>Expression is enhanced during wounding.</text>
</comment>
<comment type="similarity">
    <text evidence="3">Belongs to the APS1/VSP family.</text>
</comment>
<comment type="sequence caution" evidence="3">
    <conflict type="frameshift">
        <sequence resource="EMBL-CDS" id="CAA79173"/>
    </conflict>
</comment>
<reference key="1">
    <citation type="submission" date="1998-01" db="EMBL/GenBank/DDBJ databases">
        <title>An Arabidopsis thaliana gene encoding a putative vegetative storage protein (vsp).</title>
        <authorList>
            <person name="Guerineau F."/>
            <person name="Zhou D.X."/>
        </authorList>
    </citation>
    <scope>NUCLEOTIDE SEQUENCE [GENOMIC DNA]</scope>
    <source>
        <strain>cv. C24</strain>
    </source>
</reference>
<reference key="2">
    <citation type="submission" date="1994-05" db="EMBL/GenBank/DDBJ databases">
        <title>High expression of two novel genes in Arabidopsis thaliana flower carpels.</title>
        <authorList>
            <person name="Yu D.Y."/>
            <person name="Quigley F."/>
            <person name="Mache R."/>
        </authorList>
    </citation>
    <scope>NUCLEOTIDE SEQUENCE [MRNA]</scope>
    <source>
        <strain>cv. C24</strain>
        <tissue>Flower bud</tissue>
    </source>
</reference>
<reference key="3">
    <citation type="journal article" date="1996" name="Plant Mol. Biol.">
        <title>Isolation and characterization of cDNA clones corresponding to the genes expressed preferentially in floral organs of Arabidopsis thaliana.</title>
        <authorList>
            <person name="Utsugi S."/>
            <person name="Sakamoto W."/>
            <person name="Ogura Y."/>
            <person name="Murata M."/>
            <person name="Motoyoshi F."/>
        </authorList>
    </citation>
    <scope>NUCLEOTIDE SEQUENCE [MRNA]</scope>
    <source>
        <strain>cv. Columbia</strain>
        <tissue>Flower bud</tissue>
    </source>
</reference>
<reference key="4">
    <citation type="journal article" date="1998" name="Plant Mol. Biol.">
        <title>Arabidopsis thaliana vegetative storage protein (VSP) genes: gene organization and tissue-specific expression.</title>
        <authorList>
            <person name="Utsugi S."/>
            <person name="Sakamoto W."/>
            <person name="Murata M."/>
            <person name="Motoyoshi F."/>
        </authorList>
    </citation>
    <scope>NUCLEOTIDE SEQUENCE [GENOMIC DNA]</scope>
</reference>
<reference key="5">
    <citation type="journal article" date="2000" name="Nature">
        <title>Sequence and analysis of chromosome 5 of the plant Arabidopsis thaliana.</title>
        <authorList>
            <person name="Tabata S."/>
            <person name="Kaneko T."/>
            <person name="Nakamura Y."/>
            <person name="Kotani H."/>
            <person name="Kato T."/>
            <person name="Asamizu E."/>
            <person name="Miyajima N."/>
            <person name="Sasamoto S."/>
            <person name="Kimura T."/>
            <person name="Hosouchi T."/>
            <person name="Kawashima K."/>
            <person name="Kohara M."/>
            <person name="Matsumoto M."/>
            <person name="Matsuno A."/>
            <person name="Muraki A."/>
            <person name="Nakayama S."/>
            <person name="Nakazaki N."/>
            <person name="Naruo K."/>
            <person name="Okumura S."/>
            <person name="Shinpo S."/>
            <person name="Takeuchi C."/>
            <person name="Wada T."/>
            <person name="Watanabe A."/>
            <person name="Yamada M."/>
            <person name="Yasuda M."/>
            <person name="Sato S."/>
            <person name="de la Bastide M."/>
            <person name="Huang E."/>
            <person name="Spiegel L."/>
            <person name="Gnoj L."/>
            <person name="O'Shaughnessy A."/>
            <person name="Preston R."/>
            <person name="Habermann K."/>
            <person name="Murray J."/>
            <person name="Johnson D."/>
            <person name="Rohlfing T."/>
            <person name="Nelson J."/>
            <person name="Stoneking T."/>
            <person name="Pepin K."/>
            <person name="Spieth J."/>
            <person name="Sekhon M."/>
            <person name="Armstrong J."/>
            <person name="Becker M."/>
            <person name="Belter E."/>
            <person name="Cordum H."/>
            <person name="Cordes M."/>
            <person name="Courtney L."/>
            <person name="Courtney W."/>
            <person name="Dante M."/>
            <person name="Du H."/>
            <person name="Edwards J."/>
            <person name="Fryman J."/>
            <person name="Haakensen B."/>
            <person name="Lamar E."/>
            <person name="Latreille P."/>
            <person name="Leonard S."/>
            <person name="Meyer R."/>
            <person name="Mulvaney E."/>
            <person name="Ozersky P."/>
            <person name="Riley A."/>
            <person name="Strowmatt C."/>
            <person name="Wagner-McPherson C."/>
            <person name="Wollam A."/>
            <person name="Yoakum M."/>
            <person name="Bell M."/>
            <person name="Dedhia N."/>
            <person name="Parnell L."/>
            <person name="Shah R."/>
            <person name="Rodriguez M."/>
            <person name="Hoon See L."/>
            <person name="Vil D."/>
            <person name="Baker J."/>
            <person name="Kirchoff K."/>
            <person name="Toth K."/>
            <person name="King L."/>
            <person name="Bahret A."/>
            <person name="Miller B."/>
            <person name="Marra M.A."/>
            <person name="Martienssen R."/>
            <person name="McCombie W.R."/>
            <person name="Wilson R.K."/>
            <person name="Murphy G."/>
            <person name="Bancroft I."/>
            <person name="Volckaert G."/>
            <person name="Wambutt R."/>
            <person name="Duesterhoeft A."/>
            <person name="Stiekema W."/>
            <person name="Pohl T."/>
            <person name="Entian K.-D."/>
            <person name="Terryn N."/>
            <person name="Hartley N."/>
            <person name="Bent E."/>
            <person name="Johnson S."/>
            <person name="Langham S.-A."/>
            <person name="McCullagh B."/>
            <person name="Robben J."/>
            <person name="Grymonprez B."/>
            <person name="Zimmermann W."/>
            <person name="Ramsperger U."/>
            <person name="Wedler H."/>
            <person name="Balke K."/>
            <person name="Wedler E."/>
            <person name="Peters S."/>
            <person name="van Staveren M."/>
            <person name="Dirkse W."/>
            <person name="Mooijman P."/>
            <person name="Klein Lankhorst R."/>
            <person name="Weitzenegger T."/>
            <person name="Bothe G."/>
            <person name="Rose M."/>
            <person name="Hauf J."/>
            <person name="Berneiser S."/>
            <person name="Hempel S."/>
            <person name="Feldpausch M."/>
            <person name="Lamberth S."/>
            <person name="Villarroel R."/>
            <person name="Gielen J."/>
            <person name="Ardiles W."/>
            <person name="Bents O."/>
            <person name="Lemcke K."/>
            <person name="Kolesov G."/>
            <person name="Mayer K.F.X."/>
            <person name="Rudd S."/>
            <person name="Schoof H."/>
            <person name="Schueller C."/>
            <person name="Zaccaria P."/>
            <person name="Mewes H.-W."/>
            <person name="Bevan M."/>
            <person name="Fransz P.F."/>
        </authorList>
    </citation>
    <scope>NUCLEOTIDE SEQUENCE [LARGE SCALE GENOMIC DNA]</scope>
    <source>
        <strain>cv. Columbia</strain>
    </source>
</reference>
<reference key="6">
    <citation type="journal article" date="2017" name="Plant J.">
        <title>Araport11: a complete reannotation of the Arabidopsis thaliana reference genome.</title>
        <authorList>
            <person name="Cheng C.Y."/>
            <person name="Krishnakumar V."/>
            <person name="Chan A.P."/>
            <person name="Thibaud-Nissen F."/>
            <person name="Schobel S."/>
            <person name="Town C.D."/>
        </authorList>
    </citation>
    <scope>GENOME REANNOTATION</scope>
    <source>
        <strain>cv. Columbia</strain>
    </source>
</reference>
<reference key="7">
    <citation type="journal article" date="2003" name="Science">
        <title>Empirical analysis of transcriptional activity in the Arabidopsis genome.</title>
        <authorList>
            <person name="Yamada K."/>
            <person name="Lim J."/>
            <person name="Dale J.M."/>
            <person name="Chen H."/>
            <person name="Shinn P."/>
            <person name="Palm C.J."/>
            <person name="Southwick A.M."/>
            <person name="Wu H.C."/>
            <person name="Kim C.J."/>
            <person name="Nguyen M."/>
            <person name="Pham P.K."/>
            <person name="Cheuk R.F."/>
            <person name="Karlin-Newmann G."/>
            <person name="Liu S.X."/>
            <person name="Lam B."/>
            <person name="Sakano H."/>
            <person name="Wu T."/>
            <person name="Yu G."/>
            <person name="Miranda M."/>
            <person name="Quach H.L."/>
            <person name="Tripp M."/>
            <person name="Chang C.H."/>
            <person name="Lee J.M."/>
            <person name="Toriumi M.J."/>
            <person name="Chan M.M."/>
            <person name="Tang C.C."/>
            <person name="Onodera C.S."/>
            <person name="Deng J.M."/>
            <person name="Akiyama K."/>
            <person name="Ansari Y."/>
            <person name="Arakawa T."/>
            <person name="Banh J."/>
            <person name="Banno F."/>
            <person name="Bowser L."/>
            <person name="Brooks S.Y."/>
            <person name="Carninci P."/>
            <person name="Chao Q."/>
            <person name="Choy N."/>
            <person name="Enju A."/>
            <person name="Goldsmith A.D."/>
            <person name="Gurjal M."/>
            <person name="Hansen N.F."/>
            <person name="Hayashizaki Y."/>
            <person name="Johnson-Hopson C."/>
            <person name="Hsuan V.W."/>
            <person name="Iida K."/>
            <person name="Karnes M."/>
            <person name="Khan S."/>
            <person name="Koesema E."/>
            <person name="Ishida J."/>
            <person name="Jiang P.X."/>
            <person name="Jones T."/>
            <person name="Kawai J."/>
            <person name="Kamiya A."/>
            <person name="Meyers C."/>
            <person name="Nakajima M."/>
            <person name="Narusaka M."/>
            <person name="Seki M."/>
            <person name="Sakurai T."/>
            <person name="Satou M."/>
            <person name="Tamse R."/>
            <person name="Vaysberg M."/>
            <person name="Wallender E.K."/>
            <person name="Wong C."/>
            <person name="Yamamura Y."/>
            <person name="Yuan S."/>
            <person name="Shinozaki K."/>
            <person name="Davis R.W."/>
            <person name="Theologis A."/>
            <person name="Ecker J.R."/>
        </authorList>
    </citation>
    <scope>NUCLEOTIDE SEQUENCE [LARGE SCALE MRNA]</scope>
    <source>
        <strain>cv. Columbia</strain>
    </source>
</reference>
<reference key="8">
    <citation type="submission" date="2002-03" db="EMBL/GenBank/DDBJ databases">
        <title>Full-length cDNA from Arabidopsis thaliana.</title>
        <authorList>
            <person name="Brover V.V."/>
            <person name="Troukhan M.E."/>
            <person name="Alexandrov N.A."/>
            <person name="Lu Y.-P."/>
            <person name="Flavell R.B."/>
            <person name="Feldmann K.A."/>
        </authorList>
    </citation>
    <scope>NUCLEOTIDE SEQUENCE [LARGE SCALE MRNA]</scope>
</reference>
<reference key="9">
    <citation type="journal article" date="1993" name="Plant J.">
        <title>An inventory of 1152 expressed sequence tags obtained by partial sequencing of cDNAs from Arabidopsis thaliana.</title>
        <authorList>
            <person name="Hoefte H."/>
            <person name="Desprez T."/>
            <person name="Amselem J."/>
            <person name="Chiapello H."/>
            <person name="Rouze P."/>
            <person name="Caboche M."/>
            <person name="Moisan A."/>
            <person name="Jourjon M.-F."/>
            <person name="Charpenteau J.-L."/>
            <person name="Berthomieu P."/>
            <person name="Guerrier D."/>
            <person name="Giraudat J."/>
            <person name="Quigley F."/>
            <person name="Thomas F."/>
            <person name="Yu D.-Y."/>
            <person name="Mache R."/>
            <person name="Raynal M."/>
            <person name="Cooke R."/>
            <person name="Grellet F."/>
            <person name="Delseny M."/>
            <person name="Parmentier Y."/>
            <person name="de Marcillac G."/>
            <person name="Gigot C."/>
            <person name="Fleck J."/>
            <person name="Philipps G."/>
            <person name="Axelos M."/>
            <person name="Bardet C."/>
            <person name="Tremousaygue D."/>
            <person name="Lescure B."/>
        </authorList>
    </citation>
    <scope>NUCLEOTIDE SEQUENCE [LARGE SCALE MRNA] OF 202-270</scope>
    <source>
        <strain>cv. C24</strain>
        <tissue>Flower bud</tissue>
    </source>
</reference>
<sequence length="270" mass="30262">MKILSLSLLLLLAATVSHVQSSASVPGLIELLESNTIFGNEAELLEKEGLSINYPNCRSWHLGVETSNIINFDTVPANCKAYVEDYLITSKQYQYDSKTVNKEAYFYAKGLALKNDTVNVWIFDLDDTLLSSIPYYAKYGYGTENTAPGAYWSWLESGESTPGLPETLHLYENLLELGIEPIIISDRWKKLSEVTVENLKAVGVTKWKHLILKPNGSKLTQVVYKSKVRNSLVKKGYNIVGNIGDQWADLVEDTPGRVFKLPNPLYYVPS</sequence>
<evidence type="ECO:0000250" key="1"/>
<evidence type="ECO:0000255" key="2"/>
<evidence type="ECO:0000305" key="3"/>
<evidence type="ECO:0007829" key="4">
    <source>
        <dbReference type="PDB" id="4FYP"/>
    </source>
</evidence>
<accession>O49195</accession>
<accession>O23827</accession>
<accession>O82121</accession>
<accession>Q39259</accession>
<accession>Q42000</accession>
<accession>Q93VJ6</accession>
<protein>
    <recommendedName>
        <fullName>Vegetative storage protein 1</fullName>
    </recommendedName>
</protein>
<organism>
    <name type="scientific">Arabidopsis thaliana</name>
    <name type="common">Mouse-ear cress</name>
    <dbReference type="NCBI Taxonomy" id="3702"/>
    <lineage>
        <taxon>Eukaryota</taxon>
        <taxon>Viridiplantae</taxon>
        <taxon>Streptophyta</taxon>
        <taxon>Embryophyta</taxon>
        <taxon>Tracheophyta</taxon>
        <taxon>Spermatophyta</taxon>
        <taxon>Magnoliopsida</taxon>
        <taxon>eudicotyledons</taxon>
        <taxon>Gunneridae</taxon>
        <taxon>Pentapetalae</taxon>
        <taxon>rosids</taxon>
        <taxon>malvids</taxon>
        <taxon>Brassicales</taxon>
        <taxon>Brassicaceae</taxon>
        <taxon>Camelineae</taxon>
        <taxon>Arabidopsis</taxon>
    </lineage>
</organism>
<name>VSP1_ARATH</name>
<feature type="signal peptide" evidence="2">
    <location>
        <begin position="1"/>
        <end position="17"/>
    </location>
</feature>
<feature type="chain" id="PRO_0000023987" description="Vegetative storage protein 1">
    <location>
        <begin position="18"/>
        <end position="270"/>
    </location>
</feature>
<feature type="glycosylation site" description="N-linked (GlcNAc...) asparagine" evidence="2">
    <location>
        <position position="115"/>
    </location>
</feature>
<feature type="glycosylation site" description="N-linked (GlcNAc...) asparagine" evidence="2">
    <location>
        <position position="215"/>
    </location>
</feature>
<feature type="sequence conflict" description="In Ref. 2." evidence="3" ref="2">
    <original>MKIL</original>
    <variation>MV</variation>
    <location>
        <begin position="1"/>
        <end position="4"/>
    </location>
</feature>
<feature type="sequence conflict" description="In Ref. 3; BAA22095." evidence="3" ref="3">
    <original>A</original>
    <variation>V</variation>
    <location>
        <position position="13"/>
    </location>
</feature>
<feature type="sequence conflict" description="In Ref. 2; CAA56036." evidence="3" ref="2">
    <original>V</original>
    <variation>F</variation>
    <location>
        <position position="64"/>
    </location>
</feature>
<feature type="sequence conflict" description="In Ref. 2; CAA56036." evidence="3" ref="2">
    <original>I</original>
    <variation>M</variation>
    <location>
        <position position="69"/>
    </location>
</feature>
<feature type="sequence conflict" description="In Ref. 1, 2 and 8." evidence="3" ref="1 2 8">
    <original>V</original>
    <variation>I</variation>
    <location>
        <position position="118"/>
    </location>
</feature>
<feature type="sequence conflict" description="In Ref. 2; CAA56036." evidence="3" ref="2">
    <original>P</original>
    <variation>A</variation>
    <location>
        <position position="148"/>
    </location>
</feature>
<feature type="sequence conflict" description="In Ref. 2; CAA56036." evidence="3" ref="2">
    <original>E</original>
    <variation>V</variation>
    <location>
        <position position="156"/>
    </location>
</feature>
<feature type="sequence conflict" description="In Ref. 3; BAA22095." evidence="3" ref="3">
    <original>H</original>
    <variation>Y</variation>
    <location>
        <position position="169"/>
    </location>
</feature>
<feature type="sequence conflict" description="In Ref. 1, 2 and 8." evidence="3" ref="1 2 8">
    <original>VTV</original>
    <variation>ITI</variation>
    <location>
        <begin position="194"/>
        <end position="196"/>
    </location>
</feature>
<feature type="sequence conflict" description="In Ref. 2; CAA56036." evidence="3" ref="2">
    <original>L</original>
    <variation>V</variation>
    <location>
        <position position="210"/>
    </location>
</feature>
<feature type="helix" evidence="4">
    <location>
        <begin position="57"/>
        <end position="65"/>
    </location>
</feature>
<feature type="helix" evidence="4">
    <location>
        <begin position="77"/>
        <end position="79"/>
    </location>
</feature>
<feature type="helix" evidence="4">
    <location>
        <begin position="80"/>
        <end position="87"/>
    </location>
</feature>
<feature type="turn" evidence="4">
    <location>
        <begin position="88"/>
        <end position="90"/>
    </location>
</feature>
<feature type="helix" evidence="4">
    <location>
        <begin position="92"/>
        <end position="109"/>
    </location>
</feature>
<feature type="strand" evidence="4">
    <location>
        <begin position="119"/>
        <end position="123"/>
    </location>
</feature>
<feature type="turn" evidence="4">
    <location>
        <begin position="127"/>
        <end position="129"/>
    </location>
</feature>
<feature type="helix" evidence="4">
    <location>
        <begin position="133"/>
        <end position="136"/>
    </location>
</feature>
<feature type="helix" evidence="4">
    <location>
        <begin position="137"/>
        <end position="142"/>
    </location>
</feature>
<feature type="helix" evidence="4">
    <location>
        <begin position="150"/>
        <end position="156"/>
    </location>
</feature>
<feature type="helix" evidence="4">
    <location>
        <begin position="165"/>
        <end position="176"/>
    </location>
</feature>
<feature type="strand" evidence="4">
    <location>
        <begin position="180"/>
        <end position="188"/>
    </location>
</feature>
<feature type="helix" evidence="4">
    <location>
        <begin position="189"/>
        <end position="191"/>
    </location>
</feature>
<feature type="helix" evidence="4">
    <location>
        <begin position="192"/>
        <end position="201"/>
    </location>
</feature>
<feature type="strand" evidence="4">
    <location>
        <begin position="208"/>
        <end position="213"/>
    </location>
</feature>
<feature type="helix" evidence="4">
    <location>
        <begin position="221"/>
        <end position="234"/>
    </location>
</feature>
<feature type="strand" evidence="4">
    <location>
        <begin position="238"/>
        <end position="246"/>
    </location>
</feature>
<feature type="helix" evidence="4">
    <location>
        <begin position="247"/>
        <end position="250"/>
    </location>
</feature>
<feature type="strand" evidence="4">
    <location>
        <begin position="254"/>
        <end position="260"/>
    </location>
</feature>
<keyword id="KW-0002">3D-structure</keyword>
<keyword id="KW-0025">Alternative splicing</keyword>
<keyword id="KW-0325">Glycoprotein</keyword>
<keyword id="KW-1185">Reference proteome</keyword>
<keyword id="KW-0732">Signal</keyword>
<keyword id="KW-0758">Storage protein</keyword>
<dbReference type="EMBL" id="AF043343">
    <property type="protein sequence ID" value="AAB97863.1"/>
    <property type="molecule type" value="Genomic_DNA"/>
</dbReference>
<dbReference type="EMBL" id="X79490">
    <property type="protein sequence ID" value="CAA56036.1"/>
    <property type="molecule type" value="mRNA"/>
</dbReference>
<dbReference type="EMBL" id="D85190">
    <property type="protein sequence ID" value="BAA22095.1"/>
    <property type="molecule type" value="mRNA"/>
</dbReference>
<dbReference type="EMBL" id="AB006777">
    <property type="protein sequence ID" value="BAA33446.1"/>
    <property type="molecule type" value="Genomic_DNA"/>
</dbReference>
<dbReference type="EMBL" id="AL392145">
    <property type="protein sequence ID" value="CAC08252.1"/>
    <property type="molecule type" value="Genomic_DNA"/>
</dbReference>
<dbReference type="EMBL" id="CP002688">
    <property type="protein sequence ID" value="AED93360.1"/>
    <property type="molecule type" value="Genomic_DNA"/>
</dbReference>
<dbReference type="EMBL" id="AF386930">
    <property type="protein sequence ID" value="AAK62375.1"/>
    <property type="molecule type" value="mRNA"/>
</dbReference>
<dbReference type="EMBL" id="AY044328">
    <property type="protein sequence ID" value="AAK73269.1"/>
    <property type="molecule type" value="mRNA"/>
</dbReference>
<dbReference type="EMBL" id="AY072506">
    <property type="protein sequence ID" value="AAL66921.1"/>
    <property type="molecule type" value="mRNA"/>
</dbReference>
<dbReference type="EMBL" id="AY087185">
    <property type="protein sequence ID" value="AAM64741.1"/>
    <property type="molecule type" value="mRNA"/>
</dbReference>
<dbReference type="EMBL" id="Z18377">
    <property type="protein sequence ID" value="CAA79173.1"/>
    <property type="status" value="ALT_FRAME"/>
    <property type="molecule type" value="mRNA"/>
</dbReference>
<dbReference type="PIR" id="S45062">
    <property type="entry name" value="S45062"/>
</dbReference>
<dbReference type="RefSeq" id="NP_568455.1">
    <molecule id="O49195-1"/>
    <property type="nucleotide sequence ID" value="NM_122387.4"/>
</dbReference>
<dbReference type="PDB" id="4FYP">
    <property type="method" value="X-ray"/>
    <property type="resolution" value="1.80 A"/>
    <property type="chains" value="A/B=16-270"/>
</dbReference>
<dbReference type="PDBsum" id="4FYP"/>
<dbReference type="SMR" id="O49195"/>
<dbReference type="BioGRID" id="17822">
    <property type="interactions" value="6"/>
</dbReference>
<dbReference type="FunCoup" id="O49195">
    <property type="interactions" value="1"/>
</dbReference>
<dbReference type="STRING" id="3702.O49195"/>
<dbReference type="GlyCosmos" id="O49195">
    <property type="glycosylation" value="2 sites, No reported glycans"/>
</dbReference>
<dbReference type="GlyGen" id="O49195">
    <property type="glycosylation" value="3 sites"/>
</dbReference>
<dbReference type="PaxDb" id="3702-AT5G24780.1"/>
<dbReference type="ProteomicsDB" id="242684">
    <molecule id="O49195-1"/>
</dbReference>
<dbReference type="EnsemblPlants" id="AT5G24780.1">
    <molecule id="O49195-1"/>
    <property type="protein sequence ID" value="AT5G24780.1"/>
    <property type="gene ID" value="AT5G24780"/>
</dbReference>
<dbReference type="GeneID" id="832547"/>
<dbReference type="Gramene" id="AT5G24780.1">
    <molecule id="O49195-1"/>
    <property type="protein sequence ID" value="AT5G24780.1"/>
    <property type="gene ID" value="AT5G24780"/>
</dbReference>
<dbReference type="KEGG" id="ath:AT5G24780"/>
<dbReference type="Araport" id="AT5G24780"/>
<dbReference type="TAIR" id="AT5G24780">
    <property type="gene designation" value="VSP1"/>
</dbReference>
<dbReference type="eggNOG" id="ENOG502QU6T">
    <property type="taxonomic scope" value="Eukaryota"/>
</dbReference>
<dbReference type="HOGENOM" id="CLU_053338_1_1_1"/>
<dbReference type="InParanoid" id="O49195"/>
<dbReference type="OMA" id="ISYKSAQ"/>
<dbReference type="PhylomeDB" id="O49195"/>
<dbReference type="BioCyc" id="ARA:AT5G24780-MONOMER"/>
<dbReference type="EvolutionaryTrace" id="O49195"/>
<dbReference type="PRO" id="PR:O49195"/>
<dbReference type="Proteomes" id="UP000006548">
    <property type="component" value="Chromosome 5"/>
</dbReference>
<dbReference type="ExpressionAtlas" id="O49195">
    <property type="expression patterns" value="baseline and differential"/>
</dbReference>
<dbReference type="GO" id="GO:0000325">
    <property type="term" value="C:plant-type vacuole"/>
    <property type="evidence" value="ECO:0007005"/>
    <property type="project" value="TAIR"/>
</dbReference>
<dbReference type="GO" id="GO:0003993">
    <property type="term" value="F:acid phosphatase activity"/>
    <property type="evidence" value="ECO:0000314"/>
    <property type="project" value="TAIR"/>
</dbReference>
<dbReference type="GO" id="GO:0045735">
    <property type="term" value="F:nutrient reservoir activity"/>
    <property type="evidence" value="ECO:0007669"/>
    <property type="project" value="UniProtKB-KW"/>
</dbReference>
<dbReference type="GO" id="GO:0006952">
    <property type="term" value="P:defense response"/>
    <property type="evidence" value="ECO:0000270"/>
    <property type="project" value="TAIR"/>
</dbReference>
<dbReference type="GO" id="GO:0009753">
    <property type="term" value="P:response to jasmonic acid"/>
    <property type="evidence" value="ECO:0000270"/>
    <property type="project" value="TAIR"/>
</dbReference>
<dbReference type="CDD" id="cd07535">
    <property type="entry name" value="HAD_VSP"/>
    <property type="match status" value="1"/>
</dbReference>
<dbReference type="DisProt" id="DP02597"/>
<dbReference type="Gene3D" id="3.40.50.1000">
    <property type="entry name" value="HAD superfamily/HAD-like"/>
    <property type="match status" value="1"/>
</dbReference>
<dbReference type="InterPro" id="IPR005519">
    <property type="entry name" value="Acid_phosphat_B-like"/>
</dbReference>
<dbReference type="InterPro" id="IPR010028">
    <property type="entry name" value="Acid_phosphatase_pln"/>
</dbReference>
<dbReference type="InterPro" id="IPR014403">
    <property type="entry name" value="APS1/VSP"/>
</dbReference>
<dbReference type="InterPro" id="IPR036412">
    <property type="entry name" value="HAD-like_sf"/>
</dbReference>
<dbReference type="InterPro" id="IPR023214">
    <property type="entry name" value="HAD_sf"/>
</dbReference>
<dbReference type="NCBIfam" id="TIGR01675">
    <property type="entry name" value="plant-AP"/>
    <property type="match status" value="1"/>
</dbReference>
<dbReference type="PANTHER" id="PTHR31284">
    <property type="entry name" value="ACID PHOSPHATASE-LIKE PROTEIN"/>
    <property type="match status" value="1"/>
</dbReference>
<dbReference type="PANTHER" id="PTHR31284:SF19">
    <property type="entry name" value="VEGETATIVE STORAGE PROTEIN 1-RELATED"/>
    <property type="match status" value="1"/>
</dbReference>
<dbReference type="Pfam" id="PF03767">
    <property type="entry name" value="Acid_phosphat_B"/>
    <property type="match status" value="1"/>
</dbReference>
<dbReference type="PIRSF" id="PIRSF002674">
    <property type="entry name" value="VSP"/>
    <property type="match status" value="1"/>
</dbReference>
<dbReference type="SUPFAM" id="SSF56784">
    <property type="entry name" value="HAD-like"/>
    <property type="match status" value="1"/>
</dbReference>
<proteinExistence type="evidence at protein level"/>